<sequence>MAKLARVVGLVQEEQPSDMTNHPRYSPPPQQPGTPGYAQGQQQTYSQQFDWRYPPSPPPQPTQYRQPYEALGGTRPGLIPGVIPTMTPPPGMVRQRPRAGMLAIGAVTIAVVSAGIGGAAASLVGFNRAPAGPSGGPVAASAAPSIPAANMPPGSVEQVAAKVVPSVVMLETDLGRQSEEGSGIILSAEGLILTNNHVIAAAAKPPLGSPPPKTTVTFSDGRTAPFTVVGADPTSDIAVVRVQGVSGLTPISLGSSSDLRVGQPVLAIGSPLGLEGTVTTGIVSALNRPVSTTGEAGNQNTVLDAIQTDAAINPGNSGGALVNMNAQLVGVNSAIATLGADSADAQSGSIGLGFAIPVDQAKRIADELISTGKASHASLGVQVTNDKDTLGAKIVEVVAGGAAANAGVPKGVVVTKVDDRPINSADALVAAVRSKAPGATVALTFQDPSGGSRTVQVTLGKAEQ</sequence>
<accession>O53896</accession>
<accession>I6Y5B5</accession>
<feature type="chain" id="PRO_0000450863" description="Serine protease PepD">
    <location>
        <begin position="1"/>
        <end position="464"/>
    </location>
</feature>
<feature type="topological domain" description="Cytoplasmic" evidence="13">
    <location>
        <begin position="1"/>
        <end position="100"/>
    </location>
</feature>
<feature type="transmembrane region" description="Helical" evidence="2">
    <location>
        <begin position="101"/>
        <end position="121"/>
    </location>
</feature>
<feature type="topological domain" description="Periplasmic" evidence="13">
    <location>
        <begin position="122"/>
        <end position="464"/>
    </location>
</feature>
<feature type="domain" description="PDZ" evidence="3">
    <location>
        <begin position="368"/>
        <end position="449"/>
    </location>
</feature>
<feature type="region of interest" description="Disordered" evidence="4">
    <location>
        <begin position="1"/>
        <end position="71"/>
    </location>
</feature>
<feature type="compositionally biased region" description="Low complexity" evidence="4">
    <location>
        <begin position="39"/>
        <end position="48"/>
    </location>
</feature>
<feature type="active site" description="Charge relay system" evidence="1">
    <location>
        <position position="197"/>
    </location>
</feature>
<feature type="active site" description="Charge relay system" evidence="1">
    <location>
        <position position="236"/>
    </location>
</feature>
<feature type="active site" description="Charge relay system" evidence="1">
    <location>
        <position position="317"/>
    </location>
</feature>
<feature type="mutagenesis site" description="Loss of protease activity. Shows neither autoproteolytic nor proteolytic activity against beta-casein." evidence="5 6">
    <original>S</original>
    <variation>A</variation>
    <location>
        <position position="317"/>
    </location>
</feature>
<feature type="helix" evidence="17">
    <location>
        <begin position="156"/>
        <end position="163"/>
    </location>
</feature>
<feature type="helix" evidence="17">
    <location>
        <begin position="164"/>
        <end position="166"/>
    </location>
</feature>
<feature type="strand" evidence="17">
    <location>
        <begin position="167"/>
        <end position="173"/>
    </location>
</feature>
<feature type="strand" evidence="17">
    <location>
        <begin position="180"/>
        <end position="185"/>
    </location>
</feature>
<feature type="strand" evidence="17">
    <location>
        <begin position="190"/>
        <end position="195"/>
    </location>
</feature>
<feature type="helix" evidence="17">
    <location>
        <begin position="196"/>
        <end position="199"/>
    </location>
</feature>
<feature type="strand" evidence="17">
    <location>
        <begin position="213"/>
        <end position="218"/>
    </location>
</feature>
<feature type="strand" evidence="17">
    <location>
        <begin position="227"/>
        <end position="230"/>
    </location>
</feature>
<feature type="turn" evidence="17">
    <location>
        <begin position="233"/>
        <end position="236"/>
    </location>
</feature>
<feature type="strand" evidence="17">
    <location>
        <begin position="237"/>
        <end position="241"/>
    </location>
</feature>
<feature type="helix" evidence="18">
    <location>
        <begin position="256"/>
        <end position="258"/>
    </location>
</feature>
<feature type="strand" evidence="17">
    <location>
        <begin position="264"/>
        <end position="269"/>
    </location>
</feature>
<feature type="helix" evidence="17">
    <location>
        <begin position="271"/>
        <end position="273"/>
    </location>
</feature>
<feature type="strand" evidence="17">
    <location>
        <begin position="277"/>
        <end position="290"/>
    </location>
</feature>
<feature type="strand" evidence="17">
    <location>
        <begin position="303"/>
        <end position="308"/>
    </location>
</feature>
<feature type="strand" evidence="17">
    <location>
        <begin position="319"/>
        <end position="322"/>
    </location>
</feature>
<feature type="strand" evidence="17">
    <location>
        <begin position="326"/>
        <end position="335"/>
    </location>
</feature>
<feature type="strand" evidence="17">
    <location>
        <begin position="353"/>
        <end position="357"/>
    </location>
</feature>
<feature type="helix" evidence="17">
    <location>
        <begin position="358"/>
        <end position="371"/>
    </location>
</feature>
<feature type="strand" evidence="17">
    <location>
        <begin position="381"/>
        <end position="385"/>
    </location>
</feature>
<feature type="strand" evidence="17">
    <location>
        <begin position="387"/>
        <end position="397"/>
    </location>
</feature>
<feature type="turn" evidence="17">
    <location>
        <begin position="402"/>
        <end position="407"/>
    </location>
</feature>
<feature type="strand" evidence="17">
    <location>
        <begin position="413"/>
        <end position="417"/>
    </location>
</feature>
<feature type="helix" evidence="17">
    <location>
        <begin position="425"/>
        <end position="433"/>
    </location>
</feature>
<feature type="strand" evidence="17">
    <location>
        <begin position="440"/>
        <end position="446"/>
    </location>
</feature>
<feature type="turn" evidence="18">
    <location>
        <begin position="448"/>
        <end position="450"/>
    </location>
</feature>
<feature type="strand" evidence="17">
    <location>
        <begin position="452"/>
        <end position="458"/>
    </location>
</feature>
<proteinExistence type="evidence at protein level"/>
<gene>
    <name evidence="10" type="primary">pepD</name>
    <name evidence="9" type="synonym">htrA2</name>
    <name evidence="14" type="ordered locus">Rv0983</name>
</gene>
<name>PEPD_MYCTU</name>
<comment type="function">
    <text evidence="5 6 7">Required for virulence (PubMed:18479146). Acts both as a protease, which degrades and/or refolds damaged substrate targets, and as a chaperone (PubMed:18479146, PubMed:20061478). Plays an important role in the stress response network mediated through the two-component regulatory system MprAB and SigE signaling networks (PubMed:20061478). May utilize its PDZ domain to recognize and process misfolded proteins at the cell membrane, leading to activation of the MprAB and SigE signaling pathways and subsequent establishment of a positive feedback loop that facilitates bacterial adaptation (PubMed:20061478). Interacts with and potentially cleaves several proteins, including the 35 kDa antigen PspA (PubMed:21445360). Proteolytic cleavage of PspA may help to maintain cell envelope homeostasis in Mycobacterium and regulate specific stress response pathways during periods of extracytoplasmic stress (PubMed:21445360). In vitro, exhibits proteolytic activity against the artificial substrate beta-casein (PubMed:18479146, PubMed:20061478).</text>
</comment>
<comment type="catalytic activity">
    <reaction evidence="5 6">
        <text>Acts on substrates that are at least partially unfolded. The cleavage site P1 residue is normally between a pair of hydrophobic residues, such as Val-|-Val.</text>
        <dbReference type="EC" id="3.4.21.107"/>
    </reaction>
</comment>
<comment type="activity regulation">
    <text evidence="5 6 8">Probably regulates its own activity by autocleavage, which removes the PDZ domain (PubMed:18479146). Inhibited by the serine protease inhibitor diisopropylfluorophosphate (DFP) (PubMed:20061478). Inhibited by fluoroquinolone such as ciprofloxacin, moxifloxacin and ofloxacin and their analogs (PubMed:23440996).</text>
</comment>
<comment type="biophysicochemical properties">
    <phDependence>
        <text evidence="6">Optimum pH is between 7.0 and 8.5.</text>
    </phDependence>
    <temperatureDependence>
        <text evidence="6">Optimum temperature is 37 degrees Celsius.</text>
    </temperatureDependence>
</comment>
<comment type="subunit">
    <text evidence="5 7">Homotrimer (PubMed:18479146). Interacts with numerous proteins, including the 35 kDa antigen PspA (PubMed:21445360).</text>
</comment>
<comment type="subcellular location">
    <subcellularLocation>
        <location evidence="7">Cell inner membrane</location>
        <topology evidence="2">Single-pass membrane protein</topology>
    </subcellularLocation>
    <subcellularLocation>
        <location evidence="7">Secreted</location>
        <location evidence="7">Cell wall</location>
    </subcellularLocation>
    <subcellularLocation>
        <location evidence="7">Secreted</location>
    </subcellularLocation>
    <text evidence="7">Traffics from the cytoplasm through the cell membrane to the cell wall where it is autoprocessed and eventually secreted into the culture filtrate protein.</text>
</comment>
<comment type="induction">
    <text evidence="6">Transcribed from three distinct promoters, one that is located in the intergenic region between mprB and pepD, one that overlaps with the translational start site for mprA, and one upstream of mprA that resides in a predicted SigE-regulated promoter region.</text>
</comment>
<comment type="domain">
    <text evidence="5 6 7">Each subunit is composed of an N-terminal cytoplasmic domain, a transmembrane domain, a catalytic serine protease domain, and a single C-terminal PDZ domain (PubMed:18479146, PubMed:21445360). The protease domains form the central core of the trimer and the PDZ domains extend to the periphery (PubMed:18479146). PDZ domain is required for protease activity (PubMed:20061478).</text>
</comment>
<comment type="disruption phenotype">
    <text evidence="5 6">Deletion of the gene triggers a stress response under physiological conditions that results in the up-regulation of a number of gene products, including sigE, and a subset that are regulated by SigE (PubMed:20061478). Deletion mutant shows attenuated virulence in a mouse model of infection (PubMed:18479146).</text>
</comment>
<comment type="similarity">
    <text evidence="12">Belongs to the peptidase S1C family.</text>
</comment>
<reference key="1">
    <citation type="journal article" date="1998" name="Nature">
        <title>Deciphering the biology of Mycobacterium tuberculosis from the complete genome sequence.</title>
        <authorList>
            <person name="Cole S.T."/>
            <person name="Brosch R."/>
            <person name="Parkhill J."/>
            <person name="Garnier T."/>
            <person name="Churcher C.M."/>
            <person name="Harris D.E."/>
            <person name="Gordon S.V."/>
            <person name="Eiglmeier K."/>
            <person name="Gas S."/>
            <person name="Barry C.E. III"/>
            <person name="Tekaia F."/>
            <person name="Badcock K."/>
            <person name="Basham D."/>
            <person name="Brown D."/>
            <person name="Chillingworth T."/>
            <person name="Connor R."/>
            <person name="Davies R.M."/>
            <person name="Devlin K."/>
            <person name="Feltwell T."/>
            <person name="Gentles S."/>
            <person name="Hamlin N."/>
            <person name="Holroyd S."/>
            <person name="Hornsby T."/>
            <person name="Jagels K."/>
            <person name="Krogh A."/>
            <person name="McLean J."/>
            <person name="Moule S."/>
            <person name="Murphy L.D."/>
            <person name="Oliver S."/>
            <person name="Osborne J."/>
            <person name="Quail M.A."/>
            <person name="Rajandream M.A."/>
            <person name="Rogers J."/>
            <person name="Rutter S."/>
            <person name="Seeger K."/>
            <person name="Skelton S."/>
            <person name="Squares S."/>
            <person name="Squares R."/>
            <person name="Sulston J.E."/>
            <person name="Taylor K."/>
            <person name="Whitehead S."/>
            <person name="Barrell B.G."/>
        </authorList>
    </citation>
    <scope>NUCLEOTIDE SEQUENCE [LARGE SCALE GENOMIC DNA]</scope>
    <source>
        <strain>ATCC 25618 / H37Rv</strain>
    </source>
</reference>
<reference key="2">
    <citation type="journal article" date="2010" name="J. Bacteriol.">
        <title>PepD participates in the mycobacterial stress response mediated through MprAB and SigE.</title>
        <authorList>
            <person name="White M.J."/>
            <person name="He H."/>
            <person name="Penoske R.M."/>
            <person name="Twining S.S."/>
            <person name="Zahrt T.C."/>
        </authorList>
    </citation>
    <scope>FUNCTION</scope>
    <scope>CATALYTIC ACTIVITY</scope>
    <scope>ACTIVITY REGULATION</scope>
    <scope>BIOPHYSICOCHEMICAL PROPERTIES</scope>
    <scope>INDUCTION</scope>
    <scope>DOMAIN</scope>
    <scope>DISRUPTION PHENOTYPE</scope>
    <scope>MUTAGENESIS OF SER-317</scope>
    <source>
        <strain>ATCC 27294 / TMC 102 / H37Rv</strain>
    </source>
</reference>
<reference key="3">
    <citation type="journal article" date="2011" name="PLoS ONE">
        <title>The HtrA-like serine protease PepD interacts with and modulates the Mycobacterium tuberculosis 35-kDa antigen outer envelope protein.</title>
        <authorList>
            <person name="White M.J."/>
            <person name="Savaryn J.P."/>
            <person name="Bretl D.J."/>
            <person name="He H."/>
            <person name="Penoske R.M."/>
            <person name="Terhune S.S."/>
            <person name="Zahrt T.C."/>
        </authorList>
    </citation>
    <scope>FUNCTION</scope>
    <scope>INTERACTION WITH PSPA/RV2744C</scope>
    <scope>SUBCELLULAR LOCATION</scope>
    <scope>DOMAIN</scope>
    <source>
        <strain>ATCC 27294 / TMC 102 / H37Rv</strain>
    </source>
</reference>
<reference key="4">
    <citation type="journal article" date="2011" name="Mol. Cell. Proteomics">
        <title>Proteogenomic analysis of Mycobacterium tuberculosis by high resolution mass spectrometry.</title>
        <authorList>
            <person name="Kelkar D.S."/>
            <person name="Kumar D."/>
            <person name="Kumar P."/>
            <person name="Balakrishnan L."/>
            <person name="Muthusamy B."/>
            <person name="Yadav A.K."/>
            <person name="Shrivastava P."/>
            <person name="Marimuthu A."/>
            <person name="Anand S."/>
            <person name="Sundaram H."/>
            <person name="Kingsbury R."/>
            <person name="Harsha H.C."/>
            <person name="Nair B."/>
            <person name="Prasad T.S."/>
            <person name="Chauhan D.S."/>
            <person name="Katoch K."/>
            <person name="Katoch V.M."/>
            <person name="Kumar P."/>
            <person name="Chaerkady R."/>
            <person name="Ramachandran S."/>
            <person name="Dash D."/>
            <person name="Pandey A."/>
        </authorList>
    </citation>
    <scope>IDENTIFICATION BY MASS SPECTROMETRY [LARGE SCALE ANALYSIS]</scope>
    <source>
        <strain>ATCC 25618 / H37Rv</strain>
    </source>
</reference>
<reference key="5">
    <citation type="journal article" date="2012" name="Indian J. Pharm. Sci.">
        <title>Targeting multidrug resistant Mycobacterium tuberculosis HtrA2 with identical chemical entities of fluoroquinolones.</title>
        <authorList>
            <person name="Daisy P."/>
            <person name="Vijayalakshmi P."/>
            <person name="Selvaraj C."/>
            <person name="Singh S.K."/>
            <person name="Saipriya K."/>
        </authorList>
    </citation>
    <scope>ACTIVITY REGULATION</scope>
</reference>
<reference evidence="15" key="6">
    <citation type="submission" date="2004-12" db="PDB data bank">
        <title>Possible role for HtrA homologs in mycobacterium tuberculosis.</title>
        <authorList>
            <person name="Palaninathan S.K."/>
            <person name="Mohamedmohaideen N.N."/>
            <person name="Sacchettini J.C."/>
        </authorList>
    </citation>
    <scope>X-RAY CRYSTALLOGRAPHY (2.00 ANGSTROMS) OF 149-464</scope>
</reference>
<reference evidence="16" key="7">
    <citation type="journal article" date="2008" name="Biochemistry">
        <title>Structure and function of the virulence-associated high-temperature requirement A of Mycobacterium tuberculosis.</title>
        <authorList>
            <person name="Mohamedmohaideen N.N."/>
            <person name="Palaninathan S.K."/>
            <person name="Morin P.M."/>
            <person name="Williams B.J."/>
            <person name="Braunstein M."/>
            <person name="Tichy S.E."/>
            <person name="Locker J."/>
            <person name="Russell D.H."/>
            <person name="Jacobs W.R."/>
            <person name="Sacchettini J.C."/>
        </authorList>
    </citation>
    <scope>X-RAY CRYSTALLOGRAPHY (2.00 ANGSTROMS) OF 149-464 IN COMPLEX WITH AUTOPROTEOLYTIC PEPTIDE FRAGMENTS</scope>
    <scope>FUNCTION</scope>
    <scope>CATALYTIC ACTIVITY</scope>
    <scope>ACTIVITY REGULATION</scope>
    <scope>SUBUNIT</scope>
    <scope>DOMAIN</scope>
    <scope>DISRUPTION PHENOTYPE</scope>
    <scope>MUTAGENESIS OF SER-317</scope>
</reference>
<dbReference type="EC" id="3.4.21.107" evidence="5"/>
<dbReference type="EMBL" id="AL123456">
    <property type="protein sequence ID" value="CCP43733.1"/>
    <property type="molecule type" value="Genomic_DNA"/>
</dbReference>
<dbReference type="RefSeq" id="NP_215498.1">
    <property type="nucleotide sequence ID" value="NC_000962.3"/>
</dbReference>
<dbReference type="RefSeq" id="WP_010886101.1">
    <property type="nucleotide sequence ID" value="NZ_NVQJ01000018.1"/>
</dbReference>
<dbReference type="PDB" id="1Y8T">
    <property type="method" value="X-ray"/>
    <property type="resolution" value="2.00 A"/>
    <property type="chains" value="A/B/C=149-464"/>
</dbReference>
<dbReference type="PDB" id="2Z9I">
    <property type="method" value="X-ray"/>
    <property type="resolution" value="2.00 A"/>
    <property type="chains" value="A/B/C=149-464"/>
</dbReference>
<dbReference type="PDBsum" id="1Y8T"/>
<dbReference type="PDBsum" id="2Z9I"/>
<dbReference type="SMR" id="O53896"/>
<dbReference type="FunCoup" id="O53896">
    <property type="interactions" value="409"/>
</dbReference>
<dbReference type="STRING" id="83332.Rv0983"/>
<dbReference type="MEROPS" id="S01.494"/>
<dbReference type="PaxDb" id="83332-Rv0983"/>
<dbReference type="DNASU" id="885382"/>
<dbReference type="GeneID" id="885382"/>
<dbReference type="KEGG" id="mtu:Rv0983"/>
<dbReference type="KEGG" id="mtv:RVBD_0983"/>
<dbReference type="PATRIC" id="fig|83332.111.peg.1091"/>
<dbReference type="TubercuList" id="Rv0983"/>
<dbReference type="eggNOG" id="COG0265">
    <property type="taxonomic scope" value="Bacteria"/>
</dbReference>
<dbReference type="InParanoid" id="O53896"/>
<dbReference type="OrthoDB" id="9758917at2"/>
<dbReference type="PhylomeDB" id="O53896"/>
<dbReference type="EvolutionaryTrace" id="O53896"/>
<dbReference type="Proteomes" id="UP000001584">
    <property type="component" value="Chromosome"/>
</dbReference>
<dbReference type="GO" id="GO:0005576">
    <property type="term" value="C:extracellular region"/>
    <property type="evidence" value="ECO:0000314"/>
    <property type="project" value="MTBBASE"/>
</dbReference>
<dbReference type="GO" id="GO:0005886">
    <property type="term" value="C:plasma membrane"/>
    <property type="evidence" value="ECO:0007669"/>
    <property type="project" value="UniProtKB-SubCell"/>
</dbReference>
<dbReference type="GO" id="GO:0004252">
    <property type="term" value="F:serine-type endopeptidase activity"/>
    <property type="evidence" value="ECO:0007669"/>
    <property type="project" value="InterPro"/>
</dbReference>
<dbReference type="GO" id="GO:0008236">
    <property type="term" value="F:serine-type peptidase activity"/>
    <property type="evidence" value="ECO:0000314"/>
    <property type="project" value="MTBBASE"/>
</dbReference>
<dbReference type="GO" id="GO:0071236">
    <property type="term" value="P:cellular response to antibiotic"/>
    <property type="evidence" value="ECO:0000315"/>
    <property type="project" value="UniProtKB"/>
</dbReference>
<dbReference type="GO" id="GO:0030163">
    <property type="term" value="P:protein catabolic process"/>
    <property type="evidence" value="ECO:0000314"/>
    <property type="project" value="MTBBASE"/>
</dbReference>
<dbReference type="GO" id="GO:0006508">
    <property type="term" value="P:proteolysis"/>
    <property type="evidence" value="ECO:0000315"/>
    <property type="project" value="UniProtKB"/>
</dbReference>
<dbReference type="FunFam" id="2.40.10.10:FF:000001">
    <property type="entry name" value="Periplasmic serine protease DegS"/>
    <property type="match status" value="1"/>
</dbReference>
<dbReference type="FunFam" id="2.40.10.10:FF:000228">
    <property type="entry name" value="Probable serine protease PepD (Serine proteinase) (MTB32B)"/>
    <property type="match status" value="1"/>
</dbReference>
<dbReference type="Gene3D" id="2.30.42.10">
    <property type="match status" value="1"/>
</dbReference>
<dbReference type="Gene3D" id="2.40.10.10">
    <property type="entry name" value="Trypsin-like serine proteases"/>
    <property type="match status" value="2"/>
</dbReference>
<dbReference type="InterPro" id="IPR051201">
    <property type="entry name" value="Chloro_Bact_Ser_Proteases"/>
</dbReference>
<dbReference type="InterPro" id="IPR001478">
    <property type="entry name" value="PDZ"/>
</dbReference>
<dbReference type="InterPro" id="IPR036034">
    <property type="entry name" value="PDZ_sf"/>
</dbReference>
<dbReference type="InterPro" id="IPR009003">
    <property type="entry name" value="Peptidase_S1_PA"/>
</dbReference>
<dbReference type="InterPro" id="IPR043504">
    <property type="entry name" value="Peptidase_S1_PA_chymotrypsin"/>
</dbReference>
<dbReference type="InterPro" id="IPR001940">
    <property type="entry name" value="Peptidase_S1C"/>
</dbReference>
<dbReference type="PANTHER" id="PTHR43343">
    <property type="entry name" value="PEPTIDASE S12"/>
    <property type="match status" value="1"/>
</dbReference>
<dbReference type="PANTHER" id="PTHR43343:SF3">
    <property type="entry name" value="PROTEASE DO-LIKE 8, CHLOROPLASTIC"/>
    <property type="match status" value="1"/>
</dbReference>
<dbReference type="Pfam" id="PF13180">
    <property type="entry name" value="PDZ_2"/>
    <property type="match status" value="1"/>
</dbReference>
<dbReference type="Pfam" id="PF13365">
    <property type="entry name" value="Trypsin_2"/>
    <property type="match status" value="1"/>
</dbReference>
<dbReference type="PRINTS" id="PR00834">
    <property type="entry name" value="PROTEASES2C"/>
</dbReference>
<dbReference type="SMART" id="SM00228">
    <property type="entry name" value="PDZ"/>
    <property type="match status" value="1"/>
</dbReference>
<dbReference type="SUPFAM" id="SSF50156">
    <property type="entry name" value="PDZ domain-like"/>
    <property type="match status" value="1"/>
</dbReference>
<dbReference type="SUPFAM" id="SSF50494">
    <property type="entry name" value="Trypsin-like serine proteases"/>
    <property type="match status" value="1"/>
</dbReference>
<dbReference type="PROSITE" id="PS50106">
    <property type="entry name" value="PDZ"/>
    <property type="match status" value="1"/>
</dbReference>
<keyword id="KW-0002">3D-structure</keyword>
<keyword id="KW-0997">Cell inner membrane</keyword>
<keyword id="KW-1003">Cell membrane</keyword>
<keyword id="KW-0134">Cell wall</keyword>
<keyword id="KW-0378">Hydrolase</keyword>
<keyword id="KW-0472">Membrane</keyword>
<keyword id="KW-0645">Protease</keyword>
<keyword id="KW-1185">Reference proteome</keyword>
<keyword id="KW-0964">Secreted</keyword>
<keyword id="KW-0720">Serine protease</keyword>
<keyword id="KW-0346">Stress response</keyword>
<keyword id="KW-0812">Transmembrane</keyword>
<keyword id="KW-1133">Transmembrane helix</keyword>
<evidence type="ECO:0000250" key="1">
    <source>
        <dbReference type="UniProtKB" id="P0C0V0"/>
    </source>
</evidence>
<evidence type="ECO:0000255" key="2"/>
<evidence type="ECO:0000255" key="3">
    <source>
        <dbReference type="PROSITE-ProRule" id="PRU00143"/>
    </source>
</evidence>
<evidence type="ECO:0000256" key="4">
    <source>
        <dbReference type="SAM" id="MobiDB-lite"/>
    </source>
</evidence>
<evidence type="ECO:0000269" key="5">
    <source>
    </source>
</evidence>
<evidence type="ECO:0000269" key="6">
    <source>
    </source>
</evidence>
<evidence type="ECO:0000269" key="7">
    <source>
    </source>
</evidence>
<evidence type="ECO:0000269" key="8">
    <source>
    </source>
</evidence>
<evidence type="ECO:0000303" key="9">
    <source>
    </source>
</evidence>
<evidence type="ECO:0000303" key="10">
    <source>
    </source>
</evidence>
<evidence type="ECO:0000303" key="11">
    <source>
    </source>
</evidence>
<evidence type="ECO:0000305" key="12"/>
<evidence type="ECO:0000305" key="13">
    <source>
    </source>
</evidence>
<evidence type="ECO:0000312" key="14">
    <source>
        <dbReference type="EMBL" id="CCP43733.1"/>
    </source>
</evidence>
<evidence type="ECO:0007744" key="15">
    <source>
        <dbReference type="PDB" id="1Y8T"/>
    </source>
</evidence>
<evidence type="ECO:0007744" key="16">
    <source>
        <dbReference type="PDB" id="2Z9I"/>
    </source>
</evidence>
<evidence type="ECO:0007829" key="17">
    <source>
        <dbReference type="PDB" id="1Y8T"/>
    </source>
</evidence>
<evidence type="ECO:0007829" key="18">
    <source>
        <dbReference type="PDB" id="2Z9I"/>
    </source>
</evidence>
<protein>
    <recommendedName>
        <fullName evidence="12">Serine protease PepD</fullName>
        <ecNumber evidence="5">3.4.21.107</ecNumber>
    </recommendedName>
    <alternativeName>
        <fullName evidence="11">HtrA-like serine protease</fullName>
    </alternativeName>
</protein>
<organism>
    <name type="scientific">Mycobacterium tuberculosis (strain ATCC 25618 / H37Rv)</name>
    <dbReference type="NCBI Taxonomy" id="83332"/>
    <lineage>
        <taxon>Bacteria</taxon>
        <taxon>Bacillati</taxon>
        <taxon>Actinomycetota</taxon>
        <taxon>Actinomycetes</taxon>
        <taxon>Mycobacteriales</taxon>
        <taxon>Mycobacteriaceae</taxon>
        <taxon>Mycobacterium</taxon>
        <taxon>Mycobacterium tuberculosis complex</taxon>
    </lineage>
</organism>